<proteinExistence type="predicted"/>
<feature type="chain" id="PRO_0000432604" description="Plant UBX domain-containing protein 6">
    <location>
        <begin position="1"/>
        <end position="435"/>
    </location>
</feature>
<feature type="domain" description="SEP 1" evidence="2">
    <location>
        <begin position="150"/>
        <end position="211"/>
    </location>
</feature>
<feature type="domain" description="SEP 2" evidence="2">
    <location>
        <begin position="268"/>
        <end position="343"/>
    </location>
</feature>
<feature type="domain" description="UBX" evidence="1">
    <location>
        <begin position="357"/>
        <end position="434"/>
    </location>
</feature>
<feature type="region of interest" description="Disordered" evidence="3">
    <location>
        <begin position="1"/>
        <end position="150"/>
    </location>
</feature>
<feature type="region of interest" description="Disordered" evidence="3">
    <location>
        <begin position="208"/>
        <end position="265"/>
    </location>
</feature>
<feature type="region of interest" description="Disordered" evidence="3">
    <location>
        <begin position="311"/>
        <end position="352"/>
    </location>
</feature>
<feature type="compositionally biased region" description="Low complexity" evidence="3">
    <location>
        <begin position="49"/>
        <end position="62"/>
    </location>
</feature>
<feature type="compositionally biased region" description="Basic and acidic residues" evidence="3">
    <location>
        <begin position="112"/>
        <end position="129"/>
    </location>
</feature>
<feature type="compositionally biased region" description="Low complexity" evidence="3">
    <location>
        <begin position="130"/>
        <end position="141"/>
    </location>
</feature>
<feature type="compositionally biased region" description="Polar residues" evidence="3">
    <location>
        <begin position="211"/>
        <end position="222"/>
    </location>
</feature>
<feature type="compositionally biased region" description="Basic and acidic residues" evidence="3">
    <location>
        <begin position="231"/>
        <end position="242"/>
    </location>
</feature>
<feature type="compositionally biased region" description="Acidic residues" evidence="3">
    <location>
        <begin position="252"/>
        <end position="265"/>
    </location>
</feature>
<feature type="compositionally biased region" description="Low complexity" evidence="3">
    <location>
        <begin position="312"/>
        <end position="323"/>
    </location>
</feature>
<feature type="compositionally biased region" description="Low complexity" evidence="3">
    <location>
        <begin position="333"/>
        <end position="349"/>
    </location>
</feature>
<sequence>MDVNSPETTEKHLNEVSADAAKPNVPNPNDELLRRNPSSFPNLRIKIPTSSFSTFDGSSGYSPSRLQLRPPWPSLKRAAANPFSRQNKRRQGAGNVRIDDFSGGTGSDSDEAVEHYGGEENRAIERPEQSSRSMSEETVSSELEEEPQKVFTHTVTSWSNGFTVDDSSLKTLDDPENATFLEIISSMESPRELGQVRVQVKIISREEENYTESQAGSDSASTKPPPALAMRAKESAIERSEQSSKVLSGETDSAELQEQQQEDQPYEVVTYTVTIWRNGFTVDDDPFKSLDDPENAAFLEYMPEDNKFGVPTTTRSTSCSSQTHQELQTLAGSESTSTEPPLTTTQPPSMSSLVVDPAAPTTSIQLILADSTRIVTQFNTHHTIRDIRCFIDTSRPDGSKDYQLLIMGSPPTPLSDFDQTIEKAGIANSVLVQKF</sequence>
<dbReference type="EMBL" id="AB019232">
    <property type="protein sequence ID" value="BAB02361.1"/>
    <property type="status" value="ALT_SEQ"/>
    <property type="molecule type" value="Genomic_DNA"/>
</dbReference>
<dbReference type="EMBL" id="CP002686">
    <property type="protein sequence ID" value="AEE76535.1"/>
    <property type="molecule type" value="Genomic_DNA"/>
</dbReference>
<dbReference type="RefSeq" id="NP_188803.1">
    <property type="nucleotide sequence ID" value="NM_113061.2"/>
</dbReference>
<dbReference type="SMR" id="F4IXN6"/>
<dbReference type="FunCoup" id="F4IXN6">
    <property type="interactions" value="533"/>
</dbReference>
<dbReference type="STRING" id="3702.F4IXN6"/>
<dbReference type="TCDB" id="3.A.16.1.5">
    <property type="family name" value="the endoplasmic reticular retrotranslocon (er-rt) family"/>
</dbReference>
<dbReference type="PaxDb" id="3702-AT3G21660.1"/>
<dbReference type="EnsemblPlants" id="AT3G21660.1">
    <property type="protein sequence ID" value="AT3G21660.1"/>
    <property type="gene ID" value="AT3G21660"/>
</dbReference>
<dbReference type="GeneID" id="821720"/>
<dbReference type="Gramene" id="AT3G21660.1">
    <property type="protein sequence ID" value="AT3G21660.1"/>
    <property type="gene ID" value="AT3G21660"/>
</dbReference>
<dbReference type="KEGG" id="ath:AT3G21660"/>
<dbReference type="Araport" id="AT3G21660"/>
<dbReference type="TAIR" id="AT3G21660"/>
<dbReference type="eggNOG" id="KOG2086">
    <property type="taxonomic scope" value="Eukaryota"/>
</dbReference>
<dbReference type="HOGENOM" id="CLU_029402_4_2_1"/>
<dbReference type="InParanoid" id="F4IXN6"/>
<dbReference type="OMA" id="IHEAHLA"/>
<dbReference type="OrthoDB" id="25887at2759"/>
<dbReference type="PRO" id="PR:F4IXN6"/>
<dbReference type="Proteomes" id="UP000006548">
    <property type="component" value="Chromosome 3"/>
</dbReference>
<dbReference type="ExpressionAtlas" id="F4IXN6">
    <property type="expression patterns" value="baseline and differential"/>
</dbReference>
<dbReference type="CDD" id="cd01770">
    <property type="entry name" value="UBX_UBXN2"/>
    <property type="match status" value="1"/>
</dbReference>
<dbReference type="FunFam" id="3.30.420.210:FF:000012">
    <property type="entry name" value="Plant UBX domain-containing protein 6"/>
    <property type="match status" value="1"/>
</dbReference>
<dbReference type="Gene3D" id="3.10.20.90">
    <property type="entry name" value="Phosphatidylinositol 3-kinase Catalytic Subunit, Chain A, domain 1"/>
    <property type="match status" value="1"/>
</dbReference>
<dbReference type="Gene3D" id="3.30.420.210">
    <property type="entry name" value="SEP domain"/>
    <property type="match status" value="2"/>
</dbReference>
<dbReference type="InterPro" id="IPR036241">
    <property type="entry name" value="NSFL1C_SEP_dom_sf"/>
</dbReference>
<dbReference type="InterPro" id="IPR012989">
    <property type="entry name" value="SEP_domain"/>
</dbReference>
<dbReference type="InterPro" id="IPR029071">
    <property type="entry name" value="Ubiquitin-like_domsf"/>
</dbReference>
<dbReference type="InterPro" id="IPR001012">
    <property type="entry name" value="UBX_dom"/>
</dbReference>
<dbReference type="PANTHER" id="PTHR23333:SF43">
    <property type="entry name" value="PLANT UBX DOMAIN-CONTAINING PROTEIN 5-RELATED"/>
    <property type="match status" value="1"/>
</dbReference>
<dbReference type="PANTHER" id="PTHR23333">
    <property type="entry name" value="UBX DOMAIN CONTAINING PROTEIN"/>
    <property type="match status" value="1"/>
</dbReference>
<dbReference type="Pfam" id="PF08059">
    <property type="entry name" value="SEP"/>
    <property type="match status" value="2"/>
</dbReference>
<dbReference type="Pfam" id="PF00789">
    <property type="entry name" value="UBX"/>
    <property type="match status" value="1"/>
</dbReference>
<dbReference type="SMART" id="SM00553">
    <property type="entry name" value="SEP"/>
    <property type="match status" value="2"/>
</dbReference>
<dbReference type="SUPFAM" id="SSF102848">
    <property type="entry name" value="NSFL1 (p97 ATPase) cofactor p47, SEP domain"/>
    <property type="match status" value="2"/>
</dbReference>
<dbReference type="SUPFAM" id="SSF54236">
    <property type="entry name" value="Ubiquitin-like"/>
    <property type="match status" value="1"/>
</dbReference>
<dbReference type="PROSITE" id="PS51399">
    <property type="entry name" value="SEP"/>
    <property type="match status" value="2"/>
</dbReference>
<dbReference type="PROSITE" id="PS50033">
    <property type="entry name" value="UBX"/>
    <property type="match status" value="1"/>
</dbReference>
<gene>
    <name evidence="4" type="primary">PUX6</name>
    <name evidence="6" type="ordered locus">At3g21660</name>
    <name evidence="7" type="ORF">MIL23.23</name>
</gene>
<organism>
    <name type="scientific">Arabidopsis thaliana</name>
    <name type="common">Mouse-ear cress</name>
    <dbReference type="NCBI Taxonomy" id="3702"/>
    <lineage>
        <taxon>Eukaryota</taxon>
        <taxon>Viridiplantae</taxon>
        <taxon>Streptophyta</taxon>
        <taxon>Embryophyta</taxon>
        <taxon>Tracheophyta</taxon>
        <taxon>Spermatophyta</taxon>
        <taxon>Magnoliopsida</taxon>
        <taxon>eudicotyledons</taxon>
        <taxon>Gunneridae</taxon>
        <taxon>Pentapetalae</taxon>
        <taxon>rosids</taxon>
        <taxon>malvids</taxon>
        <taxon>Brassicales</taxon>
        <taxon>Brassicaceae</taxon>
        <taxon>Camelineae</taxon>
        <taxon>Arabidopsis</taxon>
    </lineage>
</organism>
<accession>F4IXN6</accession>
<accession>Q9LVE1</accession>
<name>PUX6_ARATH</name>
<reference key="1">
    <citation type="journal article" date="2000" name="DNA Res.">
        <title>Structural analysis of Arabidopsis thaliana chromosome 3. I. Sequence features of the regions of 4,504,864 bp covered by sixty P1 and TAC clones.</title>
        <authorList>
            <person name="Sato S."/>
            <person name="Nakamura Y."/>
            <person name="Kaneko T."/>
            <person name="Katoh T."/>
            <person name="Asamizu E."/>
            <person name="Tabata S."/>
        </authorList>
    </citation>
    <scope>NUCLEOTIDE SEQUENCE [LARGE SCALE GENOMIC DNA]</scope>
    <source>
        <strain>cv. Columbia</strain>
    </source>
</reference>
<reference key="2">
    <citation type="journal article" date="2017" name="Plant J.">
        <title>Araport11: a complete reannotation of the Arabidopsis thaliana reference genome.</title>
        <authorList>
            <person name="Cheng C.Y."/>
            <person name="Krishnakumar V."/>
            <person name="Chan A.P."/>
            <person name="Thibaud-Nissen F."/>
            <person name="Schobel S."/>
            <person name="Town C.D."/>
        </authorList>
    </citation>
    <scope>GENOME REANNOTATION</scope>
    <source>
        <strain>cv. Columbia</strain>
    </source>
</reference>
<reference key="3">
    <citation type="book" date="2005" name="Proceedings of the 16th international conference on Arabidopsis research">
        <title>The plant UBX-domain containing (PUX) protein family regulates the function of Arabidopsis CDC48, a conserved essential AAA-ATPase.</title>
        <authorList>
            <person name="Posthuma R."/>
            <person name="Rancour D."/>
            <person name="Park S."/>
            <person name="Bates B."/>
            <person name="Bednarek S."/>
        </authorList>
    </citation>
    <scope>GENE FAMILY</scope>
</reference>
<protein>
    <recommendedName>
        <fullName evidence="4">Plant UBX domain-containing protein 6</fullName>
        <shortName evidence="4">PUX6</shortName>
    </recommendedName>
</protein>
<comment type="sequence caution" evidence="5">
    <conflict type="erroneous gene model prediction">
        <sequence resource="EMBL-CDS" id="BAB02361"/>
    </conflict>
</comment>
<keyword id="KW-1185">Reference proteome</keyword>
<keyword id="KW-0677">Repeat</keyword>
<keyword id="KW-0833">Ubl conjugation pathway</keyword>
<evidence type="ECO:0000255" key="1">
    <source>
        <dbReference type="PROSITE-ProRule" id="PRU00215"/>
    </source>
</evidence>
<evidence type="ECO:0000255" key="2">
    <source>
        <dbReference type="PROSITE-ProRule" id="PRU00732"/>
    </source>
</evidence>
<evidence type="ECO:0000256" key="3">
    <source>
        <dbReference type="SAM" id="MobiDB-lite"/>
    </source>
</evidence>
<evidence type="ECO:0000303" key="4">
    <source ref="3"/>
</evidence>
<evidence type="ECO:0000305" key="5"/>
<evidence type="ECO:0000312" key="6">
    <source>
        <dbReference type="Araport" id="AT3G21660"/>
    </source>
</evidence>
<evidence type="ECO:0000312" key="7">
    <source>
        <dbReference type="EMBL" id="BAB02361.1"/>
    </source>
</evidence>